<evidence type="ECO:0000269" key="1">
    <source>
    </source>
</evidence>
<evidence type="ECO:0000303" key="2">
    <source>
    </source>
</evidence>
<evidence type="ECO:0000305" key="3"/>
<evidence type="ECO:0000305" key="4">
    <source>
    </source>
</evidence>
<name>MLPB_BORBU</name>
<keyword id="KW-0998">Cell outer membrane</keyword>
<keyword id="KW-0449">Lipoprotein</keyword>
<keyword id="KW-0472">Membrane</keyword>
<keyword id="KW-0564">Palmitate</keyword>
<keyword id="KW-0614">Plasmid</keyword>
<keyword id="KW-0732">Signal</keyword>
<proteinExistence type="inferred from homology"/>
<comment type="function">
    <text evidence="1 4">An outer membrane protein that may participate in pathogenesis. Some human Lyme disease patients have antibodies against this protein (PubMed:10948116). The Mlp proteins probably undergo intragenic recombination, generating new alleles (Probable).</text>
</comment>
<comment type="subcellular location">
    <subcellularLocation>
        <location evidence="4">Cell outer membrane</location>
        <topology evidence="4">Lipid-anchor</topology>
    </subcellularLocation>
</comment>
<comment type="miscellaneous">
    <text evidence="4">This plasmid is not found in the completely sequenced reference strain B31.</text>
</comment>
<comment type="similarity">
    <text evidence="3">Belongs to the Multicopy lipoprotein (Mlp) family.</text>
</comment>
<gene>
    <name evidence="2" type="primary">mlpB</name>
</gene>
<protein>
    <recommendedName>
        <fullName evidence="2">Lipoprotein MlpB</fullName>
    </recommendedName>
</protein>
<accession>Q9F8F9</accession>
<geneLocation type="plasmid">
    <name>cp32-2</name>
</geneLocation>
<dbReference type="EMBL" id="AF245449">
    <property type="protein sequence ID" value="AAG09775.1"/>
    <property type="molecule type" value="Genomic_DNA"/>
</dbReference>
<dbReference type="SMR" id="Q9F8F9"/>
<dbReference type="GO" id="GO:0009279">
    <property type="term" value="C:cell outer membrane"/>
    <property type="evidence" value="ECO:0007669"/>
    <property type="project" value="UniProtKB-SubCell"/>
</dbReference>
<dbReference type="InterPro" id="IPR004983">
    <property type="entry name" value="Mlp"/>
</dbReference>
<dbReference type="Pfam" id="PF03304">
    <property type="entry name" value="Mlp"/>
    <property type="match status" value="1"/>
</dbReference>
<sequence>MKIINILFCLLLIVLNSCNANDNDTFNNNSVQQTKSRKKRDLSQKELLQQEKITLTSDEEKMFTSLVTAFKYTVEKLSGDTNGCNNENKNKCTGFFDWLSEDIQKQKELAGAFTKVYNFLKSKAQNEAFDTYIKGAIDCKKTLHKIVIIITNMEKVRTKRAYFRGVAGSIFTDNNDNDGIYKCLKDELLNDTSNHYEGLTSDWDN</sequence>
<feature type="signal peptide" evidence="3">
    <location>
        <begin position="1"/>
        <end position="17"/>
    </location>
</feature>
<feature type="chain" id="PRO_5004325266" description="Lipoprotein MlpB" evidence="3">
    <location>
        <begin position="18"/>
        <end position="205"/>
    </location>
</feature>
<feature type="lipid moiety-binding region" description="N-palmitoyl cysteine" evidence="3">
    <location>
        <position position="18"/>
    </location>
</feature>
<feature type="lipid moiety-binding region" description="S-diacylglycerol cysteine" evidence="3">
    <location>
        <position position="18"/>
    </location>
</feature>
<organism>
    <name type="scientific">Borreliella burgdorferi (strain ATCC 35210 / DSM 4680 / CIP 102532 / B31)</name>
    <name type="common">Borrelia burgdorferi</name>
    <dbReference type="NCBI Taxonomy" id="224326"/>
    <lineage>
        <taxon>Bacteria</taxon>
        <taxon>Pseudomonadati</taxon>
        <taxon>Spirochaetota</taxon>
        <taxon>Spirochaetia</taxon>
        <taxon>Spirochaetales</taxon>
        <taxon>Borreliaceae</taxon>
        <taxon>Borreliella</taxon>
    </lineage>
</organism>
<reference key="1">
    <citation type="journal article" date="2000" name="Infect. Immun.">
        <title>Expression and immunological analysis of the plasmid-borne mlp genes of Borrelia burgdorferi strain B31.</title>
        <authorList>
            <person name="Porcella S.F."/>
            <person name="Fitzpatrick C.A."/>
            <person name="Bono J.L."/>
        </authorList>
    </citation>
    <scope>NUCLEOTIDE SEQUENCE [GENOMIC DNA]</scope>
    <scope>FUNCTION</scope>
    <scope>ANTIGENICITY</scope>
    <scope>SUBCELLULAR LOCATION</scope>
    <source>
        <strain>B31-M1</strain>
        <plasmid>cp32-2</plasmid>
    </source>
</reference>